<protein>
    <recommendedName>
        <fullName evidence="1">3-ketoacyl-CoA thiolase</fullName>
        <ecNumber evidence="1">2.3.1.16</ecNumber>
    </recommendedName>
    <alternativeName>
        <fullName evidence="1">Acetyl-CoA acyltransferase</fullName>
    </alternativeName>
    <alternativeName>
        <fullName evidence="1">Beta-ketothiolase</fullName>
    </alternativeName>
    <alternativeName>
        <fullName evidence="1">Fatty acid oxidation complex subunit beta</fullName>
    </alternativeName>
</protein>
<dbReference type="EC" id="2.3.1.16" evidence="1"/>
<dbReference type="EMBL" id="AE014075">
    <property type="protein sequence ID" value="AAN83225.1"/>
    <property type="molecule type" value="Genomic_DNA"/>
</dbReference>
<dbReference type="RefSeq" id="WP_000438745.1">
    <property type="nucleotide sequence ID" value="NZ_CP051263.1"/>
</dbReference>
<dbReference type="SMR" id="Q8FBI3"/>
<dbReference type="STRING" id="199310.c4792"/>
<dbReference type="KEGG" id="ecc:c4792"/>
<dbReference type="eggNOG" id="COG0183">
    <property type="taxonomic scope" value="Bacteria"/>
</dbReference>
<dbReference type="HOGENOM" id="CLU_031026_2_3_6"/>
<dbReference type="BioCyc" id="ECOL199310:C4792-MONOMER"/>
<dbReference type="UniPathway" id="UPA00659"/>
<dbReference type="Proteomes" id="UP000001410">
    <property type="component" value="Chromosome"/>
</dbReference>
<dbReference type="GO" id="GO:0005737">
    <property type="term" value="C:cytoplasm"/>
    <property type="evidence" value="ECO:0007669"/>
    <property type="project" value="UniProtKB-SubCell"/>
</dbReference>
<dbReference type="GO" id="GO:0003988">
    <property type="term" value="F:acetyl-CoA C-acyltransferase activity"/>
    <property type="evidence" value="ECO:0007669"/>
    <property type="project" value="UniProtKB-UniRule"/>
</dbReference>
<dbReference type="GO" id="GO:0006635">
    <property type="term" value="P:fatty acid beta-oxidation"/>
    <property type="evidence" value="ECO:0007669"/>
    <property type="project" value="UniProtKB-UniRule"/>
</dbReference>
<dbReference type="GO" id="GO:0010124">
    <property type="term" value="P:phenylacetate catabolic process"/>
    <property type="evidence" value="ECO:0007669"/>
    <property type="project" value="TreeGrafter"/>
</dbReference>
<dbReference type="CDD" id="cd00751">
    <property type="entry name" value="thiolase"/>
    <property type="match status" value="1"/>
</dbReference>
<dbReference type="FunFam" id="3.40.47.10:FF:000010">
    <property type="entry name" value="Acetyl-CoA acetyltransferase (Thiolase)"/>
    <property type="match status" value="1"/>
</dbReference>
<dbReference type="Gene3D" id="3.40.47.10">
    <property type="match status" value="2"/>
</dbReference>
<dbReference type="HAMAP" id="MF_01620">
    <property type="entry name" value="FadA"/>
    <property type="match status" value="1"/>
</dbReference>
<dbReference type="InterPro" id="IPR012805">
    <property type="entry name" value="FadA"/>
</dbReference>
<dbReference type="InterPro" id="IPR002155">
    <property type="entry name" value="Thiolase"/>
</dbReference>
<dbReference type="InterPro" id="IPR016039">
    <property type="entry name" value="Thiolase-like"/>
</dbReference>
<dbReference type="InterPro" id="IPR050215">
    <property type="entry name" value="Thiolase-like_sf_Thiolase"/>
</dbReference>
<dbReference type="InterPro" id="IPR020615">
    <property type="entry name" value="Thiolase_acyl_enz_int_AS"/>
</dbReference>
<dbReference type="InterPro" id="IPR020610">
    <property type="entry name" value="Thiolase_AS"/>
</dbReference>
<dbReference type="InterPro" id="IPR020617">
    <property type="entry name" value="Thiolase_C"/>
</dbReference>
<dbReference type="InterPro" id="IPR020613">
    <property type="entry name" value="Thiolase_CS"/>
</dbReference>
<dbReference type="InterPro" id="IPR020616">
    <property type="entry name" value="Thiolase_N"/>
</dbReference>
<dbReference type="NCBIfam" id="TIGR01930">
    <property type="entry name" value="AcCoA-C-Actrans"/>
    <property type="match status" value="1"/>
</dbReference>
<dbReference type="NCBIfam" id="TIGR02445">
    <property type="entry name" value="fadA"/>
    <property type="match status" value="1"/>
</dbReference>
<dbReference type="NCBIfam" id="NF006510">
    <property type="entry name" value="PRK08947.1"/>
    <property type="match status" value="1"/>
</dbReference>
<dbReference type="PANTHER" id="PTHR43853:SF11">
    <property type="entry name" value="3-KETOACYL-COA THIOLASE FADA"/>
    <property type="match status" value="1"/>
</dbReference>
<dbReference type="PANTHER" id="PTHR43853">
    <property type="entry name" value="3-KETOACYL-COA THIOLASE, PEROXISOMAL"/>
    <property type="match status" value="1"/>
</dbReference>
<dbReference type="Pfam" id="PF02803">
    <property type="entry name" value="Thiolase_C"/>
    <property type="match status" value="1"/>
</dbReference>
<dbReference type="Pfam" id="PF00108">
    <property type="entry name" value="Thiolase_N"/>
    <property type="match status" value="1"/>
</dbReference>
<dbReference type="PIRSF" id="PIRSF000429">
    <property type="entry name" value="Ac-CoA_Ac_transf"/>
    <property type="match status" value="1"/>
</dbReference>
<dbReference type="SUPFAM" id="SSF53901">
    <property type="entry name" value="Thiolase-like"/>
    <property type="match status" value="2"/>
</dbReference>
<dbReference type="PROSITE" id="PS00098">
    <property type="entry name" value="THIOLASE_1"/>
    <property type="match status" value="1"/>
</dbReference>
<dbReference type="PROSITE" id="PS00737">
    <property type="entry name" value="THIOLASE_2"/>
    <property type="match status" value="1"/>
</dbReference>
<dbReference type="PROSITE" id="PS00099">
    <property type="entry name" value="THIOLASE_3"/>
    <property type="match status" value="1"/>
</dbReference>
<reference key="1">
    <citation type="journal article" date="2002" name="Proc. Natl. Acad. Sci. U.S.A.">
        <title>Extensive mosaic structure revealed by the complete genome sequence of uropathogenic Escherichia coli.</title>
        <authorList>
            <person name="Welch R.A."/>
            <person name="Burland V."/>
            <person name="Plunkett G. III"/>
            <person name="Redford P."/>
            <person name="Roesch P."/>
            <person name="Rasko D."/>
            <person name="Buckles E.L."/>
            <person name="Liou S.-R."/>
            <person name="Boutin A."/>
            <person name="Hackett J."/>
            <person name="Stroud D."/>
            <person name="Mayhew G.F."/>
            <person name="Rose D.J."/>
            <person name="Zhou S."/>
            <person name="Schwartz D.C."/>
            <person name="Perna N.T."/>
            <person name="Mobley H.L.T."/>
            <person name="Donnenberg M.S."/>
            <person name="Blattner F.R."/>
        </authorList>
    </citation>
    <scope>NUCLEOTIDE SEQUENCE [LARGE SCALE GENOMIC DNA]</scope>
    <source>
        <strain>CFT073 / ATCC 700928 / UPEC</strain>
    </source>
</reference>
<sequence length="387" mass="40775">MEQVVIVDAIRTPMGRSKGGAFRNVRAEDLSAHLMRSLLARNPALEAAALDDIYWGCVQQTLEQGFNIARNAALLAEVPHSVPAVTVNRLCGSSMQALHDAARMIMTGDAQACLVGGVEHMGHVPMSHGVDFHPGLSRNVAKAAGMMGLTAEMLARMHGISREMQDAFAARSHARAWAATQSGAFKNEIIPTGGHDADGVLKQFNYDEVIRPETTVEALATLRPAFDPVSGTVTAGTSSALSDGAAAMLVMSESRARDLGLKPRACVRSMAVVGCDPSIMGYGPVPASKLALKKAGLSASDIGVFEMNEAFAAQILPCIKDLGLMEQIDEKINLNGGAIALGHPLGCSGARISTTLLNLMERKDVQFGLATMCIGLGQGIATVFERV</sequence>
<accession>Q8FBI3</accession>
<feature type="chain" id="PRO_0000206374" description="3-ketoacyl-CoA thiolase">
    <location>
        <begin position="1"/>
        <end position="387"/>
    </location>
</feature>
<feature type="active site" description="Acyl-thioester intermediate" evidence="1">
    <location>
        <position position="91"/>
    </location>
</feature>
<feature type="active site" description="Proton acceptor" evidence="1">
    <location>
        <position position="343"/>
    </location>
</feature>
<feature type="active site" description="Proton acceptor" evidence="1">
    <location>
        <position position="373"/>
    </location>
</feature>
<keyword id="KW-0012">Acyltransferase</keyword>
<keyword id="KW-0963">Cytoplasm</keyword>
<keyword id="KW-0276">Fatty acid metabolism</keyword>
<keyword id="KW-0442">Lipid degradation</keyword>
<keyword id="KW-0443">Lipid metabolism</keyword>
<keyword id="KW-1185">Reference proteome</keyword>
<keyword id="KW-0808">Transferase</keyword>
<evidence type="ECO:0000255" key="1">
    <source>
        <dbReference type="HAMAP-Rule" id="MF_01620"/>
    </source>
</evidence>
<gene>
    <name evidence="1" type="primary">fadA</name>
    <name type="ordered locus">c4792</name>
</gene>
<name>FADA_ECOL6</name>
<organism>
    <name type="scientific">Escherichia coli O6:H1 (strain CFT073 / ATCC 700928 / UPEC)</name>
    <dbReference type="NCBI Taxonomy" id="199310"/>
    <lineage>
        <taxon>Bacteria</taxon>
        <taxon>Pseudomonadati</taxon>
        <taxon>Pseudomonadota</taxon>
        <taxon>Gammaproteobacteria</taxon>
        <taxon>Enterobacterales</taxon>
        <taxon>Enterobacteriaceae</taxon>
        <taxon>Escherichia</taxon>
    </lineage>
</organism>
<proteinExistence type="inferred from homology"/>
<comment type="function">
    <text evidence="1">Catalyzes the final step of fatty acid oxidation in which acetyl-CoA is released and the CoA ester of a fatty acid two carbons shorter is formed. Involved in the aerobic and anaerobic degradation of long-chain fatty acids (By similarity).</text>
</comment>
<comment type="catalytic activity">
    <reaction evidence="1">
        <text>an acyl-CoA + acetyl-CoA = a 3-oxoacyl-CoA + CoA</text>
        <dbReference type="Rhea" id="RHEA:21564"/>
        <dbReference type="ChEBI" id="CHEBI:57287"/>
        <dbReference type="ChEBI" id="CHEBI:57288"/>
        <dbReference type="ChEBI" id="CHEBI:58342"/>
        <dbReference type="ChEBI" id="CHEBI:90726"/>
        <dbReference type="EC" id="2.3.1.16"/>
    </reaction>
</comment>
<comment type="pathway">
    <text evidence="1">Lipid metabolism; fatty acid beta-oxidation.</text>
</comment>
<comment type="subunit">
    <text evidence="1">Heterotetramer of two alpha chains (FadB) and two beta chains (FadA).</text>
</comment>
<comment type="subcellular location">
    <subcellularLocation>
        <location evidence="1">Cytoplasm</location>
    </subcellularLocation>
</comment>
<comment type="similarity">
    <text evidence="1">Belongs to the thiolase-like superfamily. Thiolase family.</text>
</comment>